<feature type="chain" id="PRO_1000165343" description="Small ribosomal subunit protein uS8">
    <location>
        <begin position="1"/>
        <end position="131"/>
    </location>
</feature>
<proteinExistence type="inferred from homology"/>
<gene>
    <name evidence="1" type="primary">rpsH</name>
    <name type="ordered locus">NAMH_1627</name>
</gene>
<sequence>MMNDIIADGLTRIRNAAMRGLEVTQLNHSKLMEAVLKVFEDKGYIESFKVVEDGNKKFINVTLKYDENGNSVINEVKKVSKPGRRVYKGYEDIKRFKNGYGTLVVSTNKGVLPNDEAYKLKVGGEVICSIW</sequence>
<keyword id="KW-0687">Ribonucleoprotein</keyword>
<keyword id="KW-0689">Ribosomal protein</keyword>
<keyword id="KW-0694">RNA-binding</keyword>
<keyword id="KW-0699">rRNA-binding</keyword>
<organism>
    <name type="scientific">Nautilia profundicola (strain ATCC BAA-1463 / DSM 18972 / AmH)</name>
    <dbReference type="NCBI Taxonomy" id="598659"/>
    <lineage>
        <taxon>Bacteria</taxon>
        <taxon>Pseudomonadati</taxon>
        <taxon>Campylobacterota</taxon>
        <taxon>Epsilonproteobacteria</taxon>
        <taxon>Nautiliales</taxon>
        <taxon>Nautiliaceae</taxon>
        <taxon>Nautilia</taxon>
    </lineage>
</organism>
<comment type="function">
    <text evidence="1">One of the primary rRNA binding proteins, it binds directly to 16S rRNA central domain where it helps coordinate assembly of the platform of the 30S subunit.</text>
</comment>
<comment type="subunit">
    <text evidence="1">Part of the 30S ribosomal subunit. Contacts proteins S5 and S12.</text>
</comment>
<comment type="similarity">
    <text evidence="1">Belongs to the universal ribosomal protein uS8 family.</text>
</comment>
<protein>
    <recommendedName>
        <fullName evidence="1">Small ribosomal subunit protein uS8</fullName>
    </recommendedName>
    <alternativeName>
        <fullName evidence="2">30S ribosomal protein S8</fullName>
    </alternativeName>
</protein>
<evidence type="ECO:0000255" key="1">
    <source>
        <dbReference type="HAMAP-Rule" id="MF_01302"/>
    </source>
</evidence>
<evidence type="ECO:0000305" key="2"/>
<accession>B9L6L9</accession>
<dbReference type="EMBL" id="CP001279">
    <property type="protein sequence ID" value="ACM92538.1"/>
    <property type="molecule type" value="Genomic_DNA"/>
</dbReference>
<dbReference type="RefSeq" id="WP_012663909.1">
    <property type="nucleotide sequence ID" value="NC_012115.1"/>
</dbReference>
<dbReference type="SMR" id="B9L6L9"/>
<dbReference type="STRING" id="598659.NAMH_1627"/>
<dbReference type="KEGG" id="nam:NAMH_1627"/>
<dbReference type="eggNOG" id="COG0096">
    <property type="taxonomic scope" value="Bacteria"/>
</dbReference>
<dbReference type="HOGENOM" id="CLU_098428_0_2_7"/>
<dbReference type="OrthoDB" id="9802617at2"/>
<dbReference type="Proteomes" id="UP000000448">
    <property type="component" value="Chromosome"/>
</dbReference>
<dbReference type="GO" id="GO:1990904">
    <property type="term" value="C:ribonucleoprotein complex"/>
    <property type="evidence" value="ECO:0007669"/>
    <property type="project" value="UniProtKB-KW"/>
</dbReference>
<dbReference type="GO" id="GO:0005840">
    <property type="term" value="C:ribosome"/>
    <property type="evidence" value="ECO:0007669"/>
    <property type="project" value="UniProtKB-KW"/>
</dbReference>
<dbReference type="GO" id="GO:0019843">
    <property type="term" value="F:rRNA binding"/>
    <property type="evidence" value="ECO:0007669"/>
    <property type="project" value="UniProtKB-UniRule"/>
</dbReference>
<dbReference type="GO" id="GO:0003735">
    <property type="term" value="F:structural constituent of ribosome"/>
    <property type="evidence" value="ECO:0007669"/>
    <property type="project" value="InterPro"/>
</dbReference>
<dbReference type="GO" id="GO:0006412">
    <property type="term" value="P:translation"/>
    <property type="evidence" value="ECO:0007669"/>
    <property type="project" value="UniProtKB-UniRule"/>
</dbReference>
<dbReference type="FunFam" id="3.30.1370.30:FF:000002">
    <property type="entry name" value="30S ribosomal protein S8"/>
    <property type="match status" value="1"/>
</dbReference>
<dbReference type="FunFam" id="3.30.1490.10:FF:000001">
    <property type="entry name" value="30S ribosomal protein S8"/>
    <property type="match status" value="1"/>
</dbReference>
<dbReference type="Gene3D" id="3.30.1370.30">
    <property type="match status" value="1"/>
</dbReference>
<dbReference type="Gene3D" id="3.30.1490.10">
    <property type="match status" value="1"/>
</dbReference>
<dbReference type="HAMAP" id="MF_01302_B">
    <property type="entry name" value="Ribosomal_uS8_B"/>
    <property type="match status" value="1"/>
</dbReference>
<dbReference type="InterPro" id="IPR000630">
    <property type="entry name" value="Ribosomal_uS8"/>
</dbReference>
<dbReference type="InterPro" id="IPR047863">
    <property type="entry name" value="Ribosomal_uS8_CS"/>
</dbReference>
<dbReference type="InterPro" id="IPR035987">
    <property type="entry name" value="Ribosomal_uS8_sf"/>
</dbReference>
<dbReference type="NCBIfam" id="NF001109">
    <property type="entry name" value="PRK00136.1"/>
    <property type="match status" value="1"/>
</dbReference>
<dbReference type="PANTHER" id="PTHR11758">
    <property type="entry name" value="40S RIBOSOMAL PROTEIN S15A"/>
    <property type="match status" value="1"/>
</dbReference>
<dbReference type="Pfam" id="PF00410">
    <property type="entry name" value="Ribosomal_S8"/>
    <property type="match status" value="1"/>
</dbReference>
<dbReference type="SUPFAM" id="SSF56047">
    <property type="entry name" value="Ribosomal protein S8"/>
    <property type="match status" value="1"/>
</dbReference>
<dbReference type="PROSITE" id="PS00053">
    <property type="entry name" value="RIBOSOMAL_S8"/>
    <property type="match status" value="1"/>
</dbReference>
<name>RS8_NAUPA</name>
<reference key="1">
    <citation type="journal article" date="2009" name="PLoS Genet.">
        <title>Adaptations to submarine hydrothermal environments exemplified by the genome of Nautilia profundicola.</title>
        <authorList>
            <person name="Campbell B.J."/>
            <person name="Smith J.L."/>
            <person name="Hanson T.E."/>
            <person name="Klotz M.G."/>
            <person name="Stein L.Y."/>
            <person name="Lee C.K."/>
            <person name="Wu D."/>
            <person name="Robinson J.M."/>
            <person name="Khouri H.M."/>
            <person name="Eisen J.A."/>
            <person name="Cary S.C."/>
        </authorList>
    </citation>
    <scope>NUCLEOTIDE SEQUENCE [LARGE SCALE GENOMIC DNA]</scope>
    <source>
        <strain>ATCC BAA-1463 / DSM 18972 / AmH</strain>
    </source>
</reference>